<organism>
    <name type="scientific">Shewanella pealeana (strain ATCC 700345 / ANG-SQ1)</name>
    <dbReference type="NCBI Taxonomy" id="398579"/>
    <lineage>
        <taxon>Bacteria</taxon>
        <taxon>Pseudomonadati</taxon>
        <taxon>Pseudomonadota</taxon>
        <taxon>Gammaproteobacteria</taxon>
        <taxon>Alteromonadales</taxon>
        <taxon>Shewanellaceae</taxon>
        <taxon>Shewanella</taxon>
    </lineage>
</organism>
<gene>
    <name evidence="1" type="primary">atpE</name>
    <name type="ordered locus">Spea_4245</name>
</gene>
<name>ATPL_SHEPA</name>
<evidence type="ECO:0000255" key="1">
    <source>
        <dbReference type="HAMAP-Rule" id="MF_01396"/>
    </source>
</evidence>
<accession>A8HAG8</accession>
<reference key="1">
    <citation type="submission" date="2007-10" db="EMBL/GenBank/DDBJ databases">
        <title>Complete sequence of Shewanella pealeana ATCC 700345.</title>
        <authorList>
            <consortium name="US DOE Joint Genome Institute"/>
            <person name="Copeland A."/>
            <person name="Lucas S."/>
            <person name="Lapidus A."/>
            <person name="Barry K."/>
            <person name="Glavina del Rio T."/>
            <person name="Dalin E."/>
            <person name="Tice H."/>
            <person name="Pitluck S."/>
            <person name="Chertkov O."/>
            <person name="Brettin T."/>
            <person name="Bruce D."/>
            <person name="Detter J.C."/>
            <person name="Han C."/>
            <person name="Schmutz J."/>
            <person name="Larimer F."/>
            <person name="Land M."/>
            <person name="Hauser L."/>
            <person name="Kyrpides N."/>
            <person name="Kim E."/>
            <person name="Zhao J.-S.Z."/>
            <person name="Manno D."/>
            <person name="Hawari J."/>
            <person name="Richardson P."/>
        </authorList>
    </citation>
    <scope>NUCLEOTIDE SEQUENCE [LARGE SCALE GENOMIC DNA]</scope>
    <source>
        <strain>ATCC 700345 / ANG-SQ1</strain>
    </source>
</reference>
<feature type="chain" id="PRO_1000184476" description="ATP synthase subunit c">
    <location>
        <begin position="1"/>
        <end position="85"/>
    </location>
</feature>
<feature type="transmembrane region" description="Helical" evidence="1">
    <location>
        <begin position="10"/>
        <end position="30"/>
    </location>
</feature>
<feature type="transmembrane region" description="Helical" evidence="1">
    <location>
        <begin position="53"/>
        <end position="73"/>
    </location>
</feature>
<feature type="site" description="Reversibly protonated during proton transport" evidence="1">
    <location>
        <position position="60"/>
    </location>
</feature>
<keyword id="KW-0066">ATP synthesis</keyword>
<keyword id="KW-0997">Cell inner membrane</keyword>
<keyword id="KW-1003">Cell membrane</keyword>
<keyword id="KW-0138">CF(0)</keyword>
<keyword id="KW-0375">Hydrogen ion transport</keyword>
<keyword id="KW-0406">Ion transport</keyword>
<keyword id="KW-0446">Lipid-binding</keyword>
<keyword id="KW-0472">Membrane</keyword>
<keyword id="KW-1185">Reference proteome</keyword>
<keyword id="KW-0812">Transmembrane</keyword>
<keyword id="KW-1133">Transmembrane helix</keyword>
<keyword id="KW-0813">Transport</keyword>
<comment type="function">
    <text evidence="1">F(1)F(0) ATP synthase produces ATP from ADP in the presence of a proton or sodium gradient. F-type ATPases consist of two structural domains, F(1) containing the extramembraneous catalytic core and F(0) containing the membrane proton channel, linked together by a central stalk and a peripheral stalk. During catalysis, ATP synthesis in the catalytic domain of F(1) is coupled via a rotary mechanism of the central stalk subunits to proton translocation.</text>
</comment>
<comment type="function">
    <text evidence="1">Key component of the F(0) channel; it plays a direct role in translocation across the membrane. A homomeric c-ring of between 10-14 subunits forms the central stalk rotor element with the F(1) delta and epsilon subunits.</text>
</comment>
<comment type="subunit">
    <text evidence="1">F-type ATPases have 2 components, F(1) - the catalytic core - and F(0) - the membrane proton channel. F(1) has five subunits: alpha(3), beta(3), gamma(1), delta(1), epsilon(1). F(0) has three main subunits: a(1), b(2) and c(10-14). The alpha and beta chains form an alternating ring which encloses part of the gamma chain. F(1) is attached to F(0) by a central stalk formed by the gamma and epsilon chains, while a peripheral stalk is formed by the delta and b chains.</text>
</comment>
<comment type="subcellular location">
    <subcellularLocation>
        <location evidence="1">Cell inner membrane</location>
        <topology evidence="1">Multi-pass membrane protein</topology>
    </subcellularLocation>
</comment>
<comment type="similarity">
    <text evidence="1">Belongs to the ATPase C chain family.</text>
</comment>
<proteinExistence type="inferred from homology"/>
<protein>
    <recommendedName>
        <fullName evidence="1">ATP synthase subunit c</fullName>
    </recommendedName>
    <alternativeName>
        <fullName evidence="1">ATP synthase F(0) sector subunit c</fullName>
    </alternativeName>
    <alternativeName>
        <fullName evidence="1">F-type ATPase subunit c</fullName>
        <shortName evidence="1">F-ATPase subunit c</shortName>
    </alternativeName>
    <alternativeName>
        <fullName evidence="1">Lipid-binding protein</fullName>
    </alternativeName>
</protein>
<sequence length="85" mass="8656">METVISFTAIAVAIMIGLAALGTGIGFAILGGKFLEASARQPELAPALQTKMFIVAGLLDAISMIAVGVALFFVFANPFLGQLAG</sequence>
<dbReference type="EMBL" id="CP000851">
    <property type="protein sequence ID" value="ABV89555.1"/>
    <property type="molecule type" value="Genomic_DNA"/>
</dbReference>
<dbReference type="RefSeq" id="WP_012157432.1">
    <property type="nucleotide sequence ID" value="NC_009901.1"/>
</dbReference>
<dbReference type="SMR" id="A8HAG8"/>
<dbReference type="STRING" id="398579.Spea_4245"/>
<dbReference type="KEGG" id="spl:Spea_4245"/>
<dbReference type="eggNOG" id="ENOG5032S3K">
    <property type="taxonomic scope" value="Bacteria"/>
</dbReference>
<dbReference type="HOGENOM" id="CLU_148047_1_0_6"/>
<dbReference type="OrthoDB" id="9811659at2"/>
<dbReference type="Proteomes" id="UP000002608">
    <property type="component" value="Chromosome"/>
</dbReference>
<dbReference type="GO" id="GO:0005886">
    <property type="term" value="C:plasma membrane"/>
    <property type="evidence" value="ECO:0007669"/>
    <property type="project" value="UniProtKB-SubCell"/>
</dbReference>
<dbReference type="GO" id="GO:0045259">
    <property type="term" value="C:proton-transporting ATP synthase complex"/>
    <property type="evidence" value="ECO:0007669"/>
    <property type="project" value="UniProtKB-KW"/>
</dbReference>
<dbReference type="GO" id="GO:0033177">
    <property type="term" value="C:proton-transporting two-sector ATPase complex, proton-transporting domain"/>
    <property type="evidence" value="ECO:0007669"/>
    <property type="project" value="InterPro"/>
</dbReference>
<dbReference type="GO" id="GO:0008289">
    <property type="term" value="F:lipid binding"/>
    <property type="evidence" value="ECO:0007669"/>
    <property type="project" value="UniProtKB-KW"/>
</dbReference>
<dbReference type="GO" id="GO:0046933">
    <property type="term" value="F:proton-transporting ATP synthase activity, rotational mechanism"/>
    <property type="evidence" value="ECO:0007669"/>
    <property type="project" value="UniProtKB-UniRule"/>
</dbReference>
<dbReference type="CDD" id="cd18185">
    <property type="entry name" value="ATP-synt_Fo_c_ATPE"/>
    <property type="match status" value="1"/>
</dbReference>
<dbReference type="FunFam" id="1.20.20.10:FF:000002">
    <property type="entry name" value="ATP synthase subunit c"/>
    <property type="match status" value="1"/>
</dbReference>
<dbReference type="Gene3D" id="1.20.20.10">
    <property type="entry name" value="F1F0 ATP synthase subunit C"/>
    <property type="match status" value="1"/>
</dbReference>
<dbReference type="HAMAP" id="MF_01396">
    <property type="entry name" value="ATP_synth_c_bact"/>
    <property type="match status" value="1"/>
</dbReference>
<dbReference type="InterPro" id="IPR005953">
    <property type="entry name" value="ATP_synth_csu_bac/chlpt"/>
</dbReference>
<dbReference type="InterPro" id="IPR000454">
    <property type="entry name" value="ATP_synth_F0_csu"/>
</dbReference>
<dbReference type="InterPro" id="IPR020537">
    <property type="entry name" value="ATP_synth_F0_csu_DDCD_BS"/>
</dbReference>
<dbReference type="InterPro" id="IPR038662">
    <property type="entry name" value="ATP_synth_F0_csu_sf"/>
</dbReference>
<dbReference type="InterPro" id="IPR002379">
    <property type="entry name" value="ATPase_proteolipid_c-like_dom"/>
</dbReference>
<dbReference type="InterPro" id="IPR035921">
    <property type="entry name" value="F/V-ATP_Csub_sf"/>
</dbReference>
<dbReference type="NCBIfam" id="TIGR01260">
    <property type="entry name" value="ATP_synt_c"/>
    <property type="match status" value="1"/>
</dbReference>
<dbReference type="NCBIfam" id="NF005363">
    <property type="entry name" value="PRK06876.1"/>
    <property type="match status" value="1"/>
</dbReference>
<dbReference type="Pfam" id="PF00137">
    <property type="entry name" value="ATP-synt_C"/>
    <property type="match status" value="1"/>
</dbReference>
<dbReference type="PRINTS" id="PR00124">
    <property type="entry name" value="ATPASEC"/>
</dbReference>
<dbReference type="SUPFAM" id="SSF81333">
    <property type="entry name" value="F1F0 ATP synthase subunit C"/>
    <property type="match status" value="1"/>
</dbReference>
<dbReference type="PROSITE" id="PS00605">
    <property type="entry name" value="ATPASE_C"/>
    <property type="match status" value="1"/>
</dbReference>